<reference key="1">
    <citation type="submission" date="2000-09" db="EMBL/GenBank/DDBJ databases">
        <title>Mammalian homologs of meiotic recombination proteins SpRec14 and ScRec103.</title>
        <authorList>
            <person name="Shannon M."/>
            <person name="Thelen M.P."/>
        </authorList>
    </citation>
    <scope>NUCLEOTIDE SEQUENCE [MRNA]</scope>
</reference>
<reference key="2">
    <citation type="submission" date="2003-07" db="EMBL/GenBank/DDBJ databases">
        <title>Cloning and sequencing of a novel human cDNA homologous to S.mansoni G protein beta subunit-like mRNA.</title>
        <authorList>
            <person name="Tu Q."/>
            <person name="Yu L."/>
            <person name="Hu P.R."/>
            <person name="Fu Q."/>
            <person name="Cui Y.Y."/>
            <person name="Xin Y.R."/>
            <person name="Xu Z.G."/>
            <person name="Zhang X.N."/>
            <person name="Gong R.M."/>
            <person name="Wang X.K."/>
            <person name="Zhao S.Y."/>
        </authorList>
    </citation>
    <scope>NUCLEOTIDE SEQUENCE [MRNA]</scope>
</reference>
<reference key="3">
    <citation type="journal article" date="2004" name="Nat. Genet.">
        <title>Complete sequencing and characterization of 21,243 full-length human cDNAs.</title>
        <authorList>
            <person name="Ota T."/>
            <person name="Suzuki Y."/>
            <person name="Nishikawa T."/>
            <person name="Otsuki T."/>
            <person name="Sugiyama T."/>
            <person name="Irie R."/>
            <person name="Wakamatsu A."/>
            <person name="Hayashi K."/>
            <person name="Sato H."/>
            <person name="Nagai K."/>
            <person name="Kimura K."/>
            <person name="Makita H."/>
            <person name="Sekine M."/>
            <person name="Obayashi M."/>
            <person name="Nishi T."/>
            <person name="Shibahara T."/>
            <person name="Tanaka T."/>
            <person name="Ishii S."/>
            <person name="Yamamoto J."/>
            <person name="Saito K."/>
            <person name="Kawai Y."/>
            <person name="Isono Y."/>
            <person name="Nakamura Y."/>
            <person name="Nagahari K."/>
            <person name="Murakami K."/>
            <person name="Yasuda T."/>
            <person name="Iwayanagi T."/>
            <person name="Wagatsuma M."/>
            <person name="Shiratori A."/>
            <person name="Sudo H."/>
            <person name="Hosoiri T."/>
            <person name="Kaku Y."/>
            <person name="Kodaira H."/>
            <person name="Kondo H."/>
            <person name="Sugawara M."/>
            <person name="Takahashi M."/>
            <person name="Kanda K."/>
            <person name="Yokoi T."/>
            <person name="Furuya T."/>
            <person name="Kikkawa E."/>
            <person name="Omura Y."/>
            <person name="Abe K."/>
            <person name="Kamihara K."/>
            <person name="Katsuta N."/>
            <person name="Sato K."/>
            <person name="Tanikawa M."/>
            <person name="Yamazaki M."/>
            <person name="Ninomiya K."/>
            <person name="Ishibashi T."/>
            <person name="Yamashita H."/>
            <person name="Murakawa K."/>
            <person name="Fujimori K."/>
            <person name="Tanai H."/>
            <person name="Kimata M."/>
            <person name="Watanabe M."/>
            <person name="Hiraoka S."/>
            <person name="Chiba Y."/>
            <person name="Ishida S."/>
            <person name="Ono Y."/>
            <person name="Takiguchi S."/>
            <person name="Watanabe S."/>
            <person name="Yosida M."/>
            <person name="Hotuta T."/>
            <person name="Kusano J."/>
            <person name="Kanehori K."/>
            <person name="Takahashi-Fujii A."/>
            <person name="Hara H."/>
            <person name="Tanase T.-O."/>
            <person name="Nomura Y."/>
            <person name="Togiya S."/>
            <person name="Komai F."/>
            <person name="Hara R."/>
            <person name="Takeuchi K."/>
            <person name="Arita M."/>
            <person name="Imose N."/>
            <person name="Musashino K."/>
            <person name="Yuuki H."/>
            <person name="Oshima A."/>
            <person name="Sasaki N."/>
            <person name="Aotsuka S."/>
            <person name="Yoshikawa Y."/>
            <person name="Matsunawa H."/>
            <person name="Ichihara T."/>
            <person name="Shiohata N."/>
            <person name="Sano S."/>
            <person name="Moriya S."/>
            <person name="Momiyama H."/>
            <person name="Satoh N."/>
            <person name="Takami S."/>
            <person name="Terashima Y."/>
            <person name="Suzuki O."/>
            <person name="Nakagawa S."/>
            <person name="Senoh A."/>
            <person name="Mizoguchi H."/>
            <person name="Goto Y."/>
            <person name="Shimizu F."/>
            <person name="Wakebe H."/>
            <person name="Hishigaki H."/>
            <person name="Watanabe T."/>
            <person name="Sugiyama A."/>
            <person name="Takemoto M."/>
            <person name="Kawakami B."/>
            <person name="Yamazaki M."/>
            <person name="Watanabe K."/>
            <person name="Kumagai A."/>
            <person name="Itakura S."/>
            <person name="Fukuzumi Y."/>
            <person name="Fujimori Y."/>
            <person name="Komiyama M."/>
            <person name="Tashiro H."/>
            <person name="Tanigami A."/>
            <person name="Fujiwara T."/>
            <person name="Ono T."/>
            <person name="Yamada K."/>
            <person name="Fujii Y."/>
            <person name="Ozaki K."/>
            <person name="Hirao M."/>
            <person name="Ohmori Y."/>
            <person name="Kawabata A."/>
            <person name="Hikiji T."/>
            <person name="Kobatake N."/>
            <person name="Inagaki H."/>
            <person name="Ikema Y."/>
            <person name="Okamoto S."/>
            <person name="Okitani R."/>
            <person name="Kawakami T."/>
            <person name="Noguchi S."/>
            <person name="Itoh T."/>
            <person name="Shigeta K."/>
            <person name="Senba T."/>
            <person name="Matsumura K."/>
            <person name="Nakajima Y."/>
            <person name="Mizuno T."/>
            <person name="Morinaga M."/>
            <person name="Sasaki M."/>
            <person name="Togashi T."/>
            <person name="Oyama M."/>
            <person name="Hata H."/>
            <person name="Watanabe M."/>
            <person name="Komatsu T."/>
            <person name="Mizushima-Sugano J."/>
            <person name="Satoh T."/>
            <person name="Shirai Y."/>
            <person name="Takahashi Y."/>
            <person name="Nakagawa K."/>
            <person name="Okumura K."/>
            <person name="Nagase T."/>
            <person name="Nomura N."/>
            <person name="Kikuchi H."/>
            <person name="Masuho Y."/>
            <person name="Yamashita R."/>
            <person name="Nakai K."/>
            <person name="Yada T."/>
            <person name="Nakamura Y."/>
            <person name="Ohara O."/>
            <person name="Isogai T."/>
            <person name="Sugano S."/>
        </authorList>
    </citation>
    <scope>NUCLEOTIDE SEQUENCE [LARGE SCALE MRNA]</scope>
</reference>
<reference key="4">
    <citation type="submission" date="2004-06" db="EMBL/GenBank/DDBJ databases">
        <title>Cloning of human full open reading frames in Gateway(TM) system entry vector (pDONR201).</title>
        <authorList>
            <person name="Ebert L."/>
            <person name="Schick M."/>
            <person name="Neubert P."/>
            <person name="Schatten R."/>
            <person name="Henze S."/>
            <person name="Korn B."/>
        </authorList>
    </citation>
    <scope>NUCLEOTIDE SEQUENCE [LARGE SCALE MRNA]</scope>
</reference>
<reference key="5">
    <citation type="submission" date="2005-09" db="EMBL/GenBank/DDBJ databases">
        <authorList>
            <person name="Mural R.J."/>
            <person name="Istrail S."/>
            <person name="Sutton G.G."/>
            <person name="Florea L."/>
            <person name="Halpern A.L."/>
            <person name="Mobarry C.M."/>
            <person name="Lippert R."/>
            <person name="Walenz B."/>
            <person name="Shatkay H."/>
            <person name="Dew I."/>
            <person name="Miller J.R."/>
            <person name="Flanigan M.J."/>
            <person name="Edwards N.J."/>
            <person name="Bolanos R."/>
            <person name="Fasulo D."/>
            <person name="Halldorsson B.V."/>
            <person name="Hannenhalli S."/>
            <person name="Turner R."/>
            <person name="Yooseph S."/>
            <person name="Lu F."/>
            <person name="Nusskern D.R."/>
            <person name="Shue B.C."/>
            <person name="Zheng X.H."/>
            <person name="Zhong F."/>
            <person name="Delcher A.L."/>
            <person name="Huson D.H."/>
            <person name="Kravitz S.A."/>
            <person name="Mouchard L."/>
            <person name="Reinert K."/>
            <person name="Remington K.A."/>
            <person name="Clark A.G."/>
            <person name="Waterman M.S."/>
            <person name="Eichler E.E."/>
            <person name="Adams M.D."/>
            <person name="Hunkapiller M.W."/>
            <person name="Myers E.W."/>
            <person name="Venter J.C."/>
        </authorList>
    </citation>
    <scope>NUCLEOTIDE SEQUENCE [LARGE SCALE GENOMIC DNA]</scope>
</reference>
<reference key="6">
    <citation type="journal article" date="2004" name="Genome Res.">
        <title>The status, quality, and expansion of the NIH full-length cDNA project: the Mammalian Gene Collection (MGC).</title>
        <authorList>
            <consortium name="The MGC Project Team"/>
        </authorList>
    </citation>
    <scope>NUCLEOTIDE SEQUENCE [LARGE SCALE MRNA]</scope>
    <source>
        <tissue>Uterus</tissue>
    </source>
</reference>
<reference key="7">
    <citation type="journal article" date="2005" name="Genes Dev.">
        <title>The human PAF complex coordinates transcription with events downstream of RNA synthesis.</title>
        <authorList>
            <person name="Zhu B."/>
            <person name="Mandal S.S."/>
            <person name="Pham A.D."/>
            <person name="Zheng Y."/>
            <person name="Erdjument-Bromage H."/>
            <person name="Batra S.K."/>
            <person name="Tempst P."/>
            <person name="Reinberg D."/>
        </authorList>
    </citation>
    <scope>FUNCTION</scope>
    <scope>SUBCELLULAR LOCATION</scope>
    <scope>IDENTIFICATION IN THE PAF1 COMPLEX</scope>
    <scope>IDENTIFICATION IN THE SKI COMPLEX</scope>
</reference>
<reference key="8">
    <citation type="journal article" date="2005" name="Mol. Cell">
        <title>Monoubiquitination of human histone H2B: the factors involved and their roles in HOX gene regulation.</title>
        <authorList>
            <person name="Zhu B."/>
            <person name="Zheng Y."/>
            <person name="Pham A.-D."/>
            <person name="Mandal S.S."/>
            <person name="Erdjument-Bromage H."/>
            <person name="Tempst P."/>
            <person name="Reinberg D."/>
        </authorList>
    </citation>
    <scope>FUNCTION</scope>
</reference>
<reference key="9">
    <citation type="journal article" date="2008" name="J. Cell Sci.">
        <title>EML3 is a nuclear microtubule-binding protein required for the correct alignment of chromosomes in metaphase.</title>
        <authorList>
            <person name="Tegha-Dunghu J."/>
            <person name="Neumann B."/>
            <person name="Reber S."/>
            <person name="Krause R."/>
            <person name="Erfle H."/>
            <person name="Walter T."/>
            <person name="Held M."/>
            <person name="Rogers P."/>
            <person name="Hupfeld K."/>
            <person name="Ruppert T."/>
            <person name="Ellenberg J."/>
            <person name="Gruss O.J."/>
        </authorList>
    </citation>
    <scope>SUBCELLULAR LOCATION</scope>
</reference>
<reference key="10">
    <citation type="journal article" date="2009" name="Anal. Chem.">
        <title>Lys-N and trypsin cover complementary parts of the phosphoproteome in a refined SCX-based approach.</title>
        <authorList>
            <person name="Gauci S."/>
            <person name="Helbig A.O."/>
            <person name="Slijper M."/>
            <person name="Krijgsveld J."/>
            <person name="Heck A.J."/>
            <person name="Mohammed S."/>
        </authorList>
    </citation>
    <scope>ACETYLATION [LARGE SCALE ANALYSIS] AT THR-2</scope>
    <scope>CLEAVAGE OF INITIATOR METHIONINE [LARGE SCALE ANALYSIS]</scope>
    <scope>IDENTIFICATION BY MASS SPECTROMETRY [LARGE SCALE ANALYSIS]</scope>
</reference>
<reference key="11">
    <citation type="journal article" date="2009" name="Genes Dev.">
        <title>DSIF, the Paf1 complex, and Tat-SF1 have nonredundant, cooperative roles in RNA polymerase II elongation.</title>
        <authorList>
            <person name="Chen Y."/>
            <person name="Yamaguchi Y."/>
            <person name="Tsugeno Y."/>
            <person name="Yamamoto J."/>
            <person name="Yamada T."/>
            <person name="Nakamura M."/>
            <person name="Hisatake K."/>
            <person name="Handa H."/>
        </authorList>
    </citation>
    <scope>IDENTIFICATION IN THE PAF1 COMPLEX</scope>
    <scope>FUNCTION OF THE PAF1 COMPLEX</scope>
</reference>
<reference key="12">
    <citation type="journal article" date="2010" name="Cell">
        <title>The human PAF1 complex acts in chromatin transcription elongation both independently and cooperatively with SII/TFIIS.</title>
        <authorList>
            <person name="Kim J."/>
            <person name="Guermah M."/>
            <person name="Roeder R.G."/>
        </authorList>
    </citation>
    <scope>IDENTIFICATION IN THE PAF1 COMPLEX</scope>
    <scope>COMPOSITION OF THE PAF1 COMPLEX</scope>
    <scope>FUNCTION OF THE PAF1 COMPLEX</scope>
</reference>
<reference key="13">
    <citation type="journal article" date="2011" name="BMC Syst. Biol.">
        <title>Initial characterization of the human central proteome.</title>
        <authorList>
            <person name="Burkard T.R."/>
            <person name="Planyavsky M."/>
            <person name="Kaupe I."/>
            <person name="Breitwieser F.P."/>
            <person name="Buerckstuemmer T."/>
            <person name="Bennett K.L."/>
            <person name="Superti-Furga G."/>
            <person name="Colinge J."/>
        </authorList>
    </citation>
    <scope>IDENTIFICATION BY MASS SPECTROMETRY [LARGE SCALE ANALYSIS]</scope>
</reference>
<reference key="14">
    <citation type="journal article" date="2012" name="Mol. Cell. Proteomics">
        <title>Comparative large-scale characterisation of plant vs. mammal proteins reveals similar and idiosyncratic N-alpha acetylation features.</title>
        <authorList>
            <person name="Bienvenut W.V."/>
            <person name="Sumpton D."/>
            <person name="Martinez A."/>
            <person name="Lilla S."/>
            <person name="Espagne C."/>
            <person name="Meinnel T."/>
            <person name="Giglione C."/>
        </authorList>
    </citation>
    <scope>ACETYLATION [LARGE SCALE ANALYSIS] AT MET-1 AND THR-2</scope>
    <scope>CLEAVAGE OF INITIATOR METHIONINE [LARGE SCALE ANALYSIS]</scope>
    <scope>IDENTIFICATION BY MASS SPECTROMETRY [LARGE SCALE ANALYSIS]</scope>
</reference>
<reference key="15">
    <citation type="journal article" date="2014" name="J. Proteomics">
        <title>An enzyme assisted RP-RPLC approach for in-depth analysis of human liver phosphoproteome.</title>
        <authorList>
            <person name="Bian Y."/>
            <person name="Song C."/>
            <person name="Cheng K."/>
            <person name="Dong M."/>
            <person name="Wang F."/>
            <person name="Huang J."/>
            <person name="Sun D."/>
            <person name="Wang L."/>
            <person name="Ye M."/>
            <person name="Zou H."/>
        </authorList>
    </citation>
    <scope>IDENTIFICATION BY MASS SPECTROMETRY [LARGE SCALE ANALYSIS]</scope>
    <source>
        <tissue>Liver</tissue>
    </source>
</reference>
<reference key="16">
    <citation type="journal article" date="2011" name="Protein Cell">
        <title>Structure and function of WD40 domain proteins.</title>
        <authorList>
            <person name="Xu C."/>
            <person name="Min J."/>
        </authorList>
    </citation>
    <scope>X-RAY CRYSTALLOGRAPHY (2.3 ANGSTROMS)</scope>
</reference>
<reference key="17">
    <citation type="journal article" date="2020" name="Mol. Cell">
        <title>Extraction of mRNA from stalled ribosomes by the Ski complex.</title>
        <authorList>
            <person name="Zinoviev A."/>
            <person name="Ayupov R.K."/>
            <person name="Abaeva I.S."/>
            <person name="Hellen C.U.T."/>
            <person name="Pestova T.V."/>
        </authorList>
    </citation>
    <scope>FUNCTION</scope>
    <scope>IDENTIFICATION IN THE SKI COMPLEX</scope>
</reference>
<reference evidence="13 14 15 16" key="18">
    <citation type="journal article" date="2022" name="Mol. Cell">
        <title>The human SKI complex regulates channeling of ribosome-bound RNA to the exosome via an intrinsic gatekeeping mechanism.</title>
        <authorList>
            <person name="Koegel A."/>
            <person name="Keidel A."/>
            <person name="Bonneau F."/>
            <person name="Schaefer I.B."/>
            <person name="Conti E."/>
        </authorList>
    </citation>
    <scope>STRUCTURE BY ELECTRON MICROSCOPY (3.10 ANGSTROMS) IN COMPLEX WITH SKIC2 AND SKIC3</scope>
    <scope>FUNCTION</scope>
    <scope>IDENTIFICATION IN THE SKI COMPLEX</scope>
</reference>
<organism>
    <name type="scientific">Homo sapiens</name>
    <name type="common">Human</name>
    <dbReference type="NCBI Taxonomy" id="9606"/>
    <lineage>
        <taxon>Eukaryota</taxon>
        <taxon>Metazoa</taxon>
        <taxon>Chordata</taxon>
        <taxon>Craniata</taxon>
        <taxon>Vertebrata</taxon>
        <taxon>Euteleostomi</taxon>
        <taxon>Mammalia</taxon>
        <taxon>Eutheria</taxon>
        <taxon>Euarchontoglires</taxon>
        <taxon>Primates</taxon>
        <taxon>Haplorrhini</taxon>
        <taxon>Catarrhini</taxon>
        <taxon>Hominidae</taxon>
        <taxon>Homo</taxon>
    </lineage>
</organism>
<sequence>MTNQYGILFKQEQAHDDAIWSVAWGTNKKENSETVVTGSLDDLVKVWKWRDERLDLQWSLEGHQLGVVSVDISHTLPIAASSSLDAHIRLWDLENGKQIKSIDAGPVDAWTLAFSPDSQYLATGTHVGKVNIFGVESGKKEYSLDTRGKFILSIAYSPDGKYLASGAIDGIINIFDIATGKLLHTLEGHAMPIRSLTFSPDSQLLVTASDDGYIKIYDVQHANLAGTLSGHASWVLNVAFCPDDTHFVSSSSDKSVKVWDVGTRTCVHTFFDHQDQVWGVKYNGNGSKIVSVGDDQEIHIYDCPI</sequence>
<feature type="chain" id="PRO_0000425748" description="Superkiller complex protein 8">
    <location>
        <begin position="1"/>
        <end position="305"/>
    </location>
</feature>
<feature type="initiator methionine" description="Removed; alternate" evidence="17 18">
    <location>
        <position position="1"/>
    </location>
</feature>
<feature type="chain" id="PRO_0000245851" description="Superkiller complex protein 8, N-terminally processed">
    <location>
        <begin position="2"/>
        <end position="305"/>
    </location>
</feature>
<feature type="repeat" description="WD 1">
    <location>
        <begin position="14"/>
        <end position="57"/>
    </location>
</feature>
<feature type="repeat" description="WD 2">
    <location>
        <begin position="62"/>
        <end position="101"/>
    </location>
</feature>
<feature type="repeat" description="WD 3">
    <location>
        <begin position="104"/>
        <end position="143"/>
    </location>
</feature>
<feature type="repeat" description="WD 4">
    <location>
        <begin position="146"/>
        <end position="187"/>
    </location>
</feature>
<feature type="repeat" description="WD 5">
    <location>
        <begin position="188"/>
        <end position="227"/>
    </location>
</feature>
<feature type="repeat" description="WD 6">
    <location>
        <begin position="230"/>
        <end position="269"/>
    </location>
</feature>
<feature type="repeat" description="WD 7">
    <location>
        <begin position="272"/>
        <end position="305"/>
    </location>
</feature>
<feature type="modified residue" description="N-acetylmethionine" evidence="18">
    <location>
        <position position="1"/>
    </location>
</feature>
<feature type="modified residue" description="N-acetylthreonine; in WD repeat-containing protein 61, N-terminally processed" evidence="17 18">
    <location>
        <position position="2"/>
    </location>
</feature>
<feature type="sequence conflict" description="In Ref. 2; AAP97249." evidence="10" ref="2">
    <original>W</original>
    <variation>R</variation>
    <location>
        <position position="91"/>
    </location>
</feature>
<feature type="sequence conflict" description="In Ref. 2; AAP97249." evidence="10" ref="2">
    <original>D</original>
    <variation>A</variation>
    <location>
        <position position="176"/>
    </location>
</feature>
<feature type="sequence conflict" description="In Ref. 4; CAG33614." evidence="10" ref="4">
    <original>S</original>
    <variation>G</variation>
    <location>
        <position position="229"/>
    </location>
</feature>
<feature type="sequence conflict" description="In Ref. 4; CAG33614." evidence="10" ref="4">
    <original>S</original>
    <variation>N</variation>
    <location>
        <position position="255"/>
    </location>
</feature>
<feature type="sequence conflict" description="In Ref. 2; AAP97249." evidence="10" ref="2">
    <original>W</original>
    <variation>R</variation>
    <location>
        <position position="259"/>
    </location>
</feature>
<feature type="strand" evidence="19">
    <location>
        <begin position="6"/>
        <end position="11"/>
    </location>
</feature>
<feature type="strand" evidence="19">
    <location>
        <begin position="14"/>
        <end position="17"/>
    </location>
</feature>
<feature type="strand" evidence="19">
    <location>
        <begin position="19"/>
        <end position="24"/>
    </location>
</feature>
<feature type="turn" evidence="19">
    <location>
        <begin position="28"/>
        <end position="30"/>
    </location>
</feature>
<feature type="strand" evidence="19">
    <location>
        <begin position="34"/>
        <end position="39"/>
    </location>
</feature>
<feature type="strand" evidence="23">
    <location>
        <begin position="40"/>
        <end position="42"/>
    </location>
</feature>
<feature type="strand" evidence="19">
    <location>
        <begin position="44"/>
        <end position="50"/>
    </location>
</feature>
<feature type="strand" evidence="19">
    <location>
        <begin position="53"/>
        <end position="60"/>
    </location>
</feature>
<feature type="strand" evidence="19">
    <location>
        <begin position="67"/>
        <end position="72"/>
    </location>
</feature>
<feature type="strand" evidence="19">
    <location>
        <begin position="74"/>
        <end position="83"/>
    </location>
</feature>
<feature type="strand" evidence="19">
    <location>
        <begin position="86"/>
        <end position="92"/>
    </location>
</feature>
<feature type="turn" evidence="19">
    <location>
        <begin position="93"/>
        <end position="96"/>
    </location>
</feature>
<feature type="strand" evidence="19">
    <location>
        <begin position="97"/>
        <end position="103"/>
    </location>
</feature>
<feature type="turn" evidence="22">
    <location>
        <begin position="106"/>
        <end position="108"/>
    </location>
</feature>
<feature type="strand" evidence="19">
    <location>
        <begin position="112"/>
        <end position="114"/>
    </location>
</feature>
<feature type="strand" evidence="19">
    <location>
        <begin position="118"/>
        <end position="124"/>
    </location>
</feature>
<feature type="strand" evidence="19">
    <location>
        <begin position="128"/>
        <end position="134"/>
    </location>
</feature>
<feature type="turn" evidence="19">
    <location>
        <begin position="135"/>
        <end position="137"/>
    </location>
</feature>
<feature type="strand" evidence="19">
    <location>
        <begin position="139"/>
        <end position="145"/>
    </location>
</feature>
<feature type="strand" evidence="19">
    <location>
        <begin position="147"/>
        <end position="149"/>
    </location>
</feature>
<feature type="strand" evidence="19">
    <location>
        <begin position="151"/>
        <end position="156"/>
    </location>
</feature>
<feature type="strand" evidence="19">
    <location>
        <begin position="160"/>
        <end position="167"/>
    </location>
</feature>
<feature type="strand" evidence="21">
    <location>
        <begin position="168"/>
        <end position="170"/>
    </location>
</feature>
<feature type="strand" evidence="19">
    <location>
        <begin position="172"/>
        <end position="176"/>
    </location>
</feature>
<feature type="turn" evidence="19">
    <location>
        <begin position="177"/>
        <end position="179"/>
    </location>
</feature>
<feature type="strand" evidence="19">
    <location>
        <begin position="182"/>
        <end position="186"/>
    </location>
</feature>
<feature type="strand" evidence="19">
    <location>
        <begin position="195"/>
        <end position="198"/>
    </location>
</feature>
<feature type="strand" evidence="19">
    <location>
        <begin position="204"/>
        <end position="208"/>
    </location>
</feature>
<feature type="strand" evidence="23">
    <location>
        <begin position="210"/>
        <end position="212"/>
    </location>
</feature>
<feature type="strand" evidence="19">
    <location>
        <begin position="214"/>
        <end position="218"/>
    </location>
</feature>
<feature type="turn" evidence="19">
    <location>
        <begin position="219"/>
        <end position="221"/>
    </location>
</feature>
<feature type="strand" evidence="19">
    <location>
        <begin position="224"/>
        <end position="228"/>
    </location>
</feature>
<feature type="strand" evidence="19">
    <location>
        <begin position="235"/>
        <end position="240"/>
    </location>
</feature>
<feature type="strand" evidence="19">
    <location>
        <begin position="244"/>
        <end position="251"/>
    </location>
</feature>
<feature type="turn" evidence="20">
    <location>
        <begin position="252"/>
        <end position="254"/>
    </location>
</feature>
<feature type="strand" evidence="19">
    <location>
        <begin position="256"/>
        <end position="260"/>
    </location>
</feature>
<feature type="turn" evidence="19">
    <location>
        <begin position="261"/>
        <end position="264"/>
    </location>
</feature>
<feature type="strand" evidence="19">
    <location>
        <begin position="265"/>
        <end position="270"/>
    </location>
</feature>
<feature type="strand" evidence="19">
    <location>
        <begin position="277"/>
        <end position="282"/>
    </location>
</feature>
<feature type="strand" evidence="19">
    <location>
        <begin position="286"/>
        <end position="293"/>
    </location>
</feature>
<feature type="strand" evidence="19">
    <location>
        <begin position="298"/>
        <end position="302"/>
    </location>
</feature>
<proteinExistence type="evidence at protein level"/>
<keyword id="KW-0002">3D-structure</keyword>
<keyword id="KW-0007">Acetylation</keyword>
<keyword id="KW-0963">Cytoplasm</keyword>
<keyword id="KW-0539">Nucleus</keyword>
<keyword id="KW-1267">Proteomics identification</keyword>
<keyword id="KW-1185">Reference proteome</keyword>
<keyword id="KW-0677">Repeat</keyword>
<keyword id="KW-0804">Transcription</keyword>
<keyword id="KW-0805">Transcription regulation</keyword>
<keyword id="KW-0853">WD repeat</keyword>
<keyword id="KW-0879">Wnt signaling pathway</keyword>
<dbReference type="EMBL" id="AF309553">
    <property type="protein sequence ID" value="AAG31639.1"/>
    <property type="molecule type" value="mRNA"/>
</dbReference>
<dbReference type="EMBL" id="AF100786">
    <property type="protein sequence ID" value="AAP97225.1"/>
    <property type="molecule type" value="mRNA"/>
</dbReference>
<dbReference type="EMBL" id="AF127799">
    <property type="protein sequence ID" value="AAP97249.1"/>
    <property type="molecule type" value="mRNA"/>
</dbReference>
<dbReference type="EMBL" id="AK024754">
    <property type="protein sequence ID" value="BAB14986.1"/>
    <property type="molecule type" value="mRNA"/>
</dbReference>
<dbReference type="EMBL" id="CR457333">
    <property type="protein sequence ID" value="CAG33614.1"/>
    <property type="molecule type" value="mRNA"/>
</dbReference>
<dbReference type="EMBL" id="CH471136">
    <property type="protein sequence ID" value="EAW99174.1"/>
    <property type="molecule type" value="Genomic_DNA"/>
</dbReference>
<dbReference type="EMBL" id="CH471136">
    <property type="protein sequence ID" value="EAW99175.1"/>
    <property type="molecule type" value="Genomic_DNA"/>
</dbReference>
<dbReference type="EMBL" id="BC010080">
    <property type="protein sequence ID" value="AAH10080.1"/>
    <property type="molecule type" value="mRNA"/>
</dbReference>
<dbReference type="CCDS" id="CCDS10300.1"/>
<dbReference type="RefSeq" id="NP_001290176.1">
    <property type="nucleotide sequence ID" value="NM_001303247.2"/>
</dbReference>
<dbReference type="RefSeq" id="NP_001290177.1">
    <property type="nucleotide sequence ID" value="NM_001303248.1"/>
</dbReference>
<dbReference type="RefSeq" id="NP_079510.1">
    <property type="nucleotide sequence ID" value="NM_025234.3"/>
</dbReference>
<dbReference type="RefSeq" id="XP_011520396.1">
    <property type="nucleotide sequence ID" value="XM_011522094.3"/>
</dbReference>
<dbReference type="RefSeq" id="XP_054234901.1">
    <property type="nucleotide sequence ID" value="XM_054378926.1"/>
</dbReference>
<dbReference type="PDB" id="3OW8">
    <property type="method" value="X-ray"/>
    <property type="resolution" value="2.30 A"/>
    <property type="chains" value="A/B/C/D=2-305"/>
</dbReference>
<dbReference type="PDB" id="6GMH">
    <property type="method" value="EM"/>
    <property type="resolution" value="3.10 A"/>
    <property type="chains" value="W=1-305"/>
</dbReference>
<dbReference type="PDB" id="6TED">
    <property type="method" value="EM"/>
    <property type="resolution" value="3.10 A"/>
    <property type="chains" value="W=1-305"/>
</dbReference>
<dbReference type="PDB" id="7OOP">
    <property type="method" value="EM"/>
    <property type="resolution" value="2.90 A"/>
    <property type="chains" value="Y=1-305"/>
</dbReference>
<dbReference type="PDB" id="7OPC">
    <property type="method" value="EM"/>
    <property type="resolution" value="3.00 A"/>
    <property type="chains" value="Y=1-305"/>
</dbReference>
<dbReference type="PDB" id="7OPD">
    <property type="method" value="EM"/>
    <property type="resolution" value="3.00 A"/>
    <property type="chains" value="Y=1-305"/>
</dbReference>
<dbReference type="PDB" id="7QDR">
    <property type="method" value="EM"/>
    <property type="resolution" value="3.70 A"/>
    <property type="chains" value="C/D=1-305"/>
</dbReference>
<dbReference type="PDB" id="7QDS">
    <property type="method" value="EM"/>
    <property type="resolution" value="3.80 A"/>
    <property type="chains" value="C/D=1-305"/>
</dbReference>
<dbReference type="PDB" id="7QDY">
    <property type="method" value="EM"/>
    <property type="resolution" value="3.10 A"/>
    <property type="chains" value="C/D=1-305"/>
</dbReference>
<dbReference type="PDB" id="7QDZ">
    <property type="method" value="EM"/>
    <property type="resolution" value="3.60 A"/>
    <property type="chains" value="C/D=1-305"/>
</dbReference>
<dbReference type="PDB" id="7UNC">
    <property type="method" value="EM"/>
    <property type="resolution" value="3.00 A"/>
    <property type="chains" value="W=1-305"/>
</dbReference>
<dbReference type="PDB" id="7UND">
    <property type="method" value="EM"/>
    <property type="resolution" value="3.00 A"/>
    <property type="chains" value="W=1-305"/>
</dbReference>
<dbReference type="PDB" id="8A3Y">
    <property type="method" value="EM"/>
    <property type="resolution" value="3.30 A"/>
    <property type="chains" value="W=1-305"/>
</dbReference>
<dbReference type="PDB" id="9EGX">
    <property type="method" value="EM"/>
    <property type="resolution" value="2.90 A"/>
    <property type="chains" value="W=1-305"/>
</dbReference>
<dbReference type="PDB" id="9EGY">
    <property type="method" value="EM"/>
    <property type="resolution" value="2.90 A"/>
    <property type="chains" value="W=1-305"/>
</dbReference>
<dbReference type="PDB" id="9EGZ">
    <property type="method" value="EM"/>
    <property type="resolution" value="2.90 A"/>
    <property type="chains" value="W=1-305"/>
</dbReference>
<dbReference type="PDB" id="9EH0">
    <property type="method" value="EM"/>
    <property type="resolution" value="3.60 A"/>
    <property type="chains" value="W=1-305"/>
</dbReference>
<dbReference type="PDB" id="9EH1">
    <property type="method" value="EM"/>
    <property type="resolution" value="3.10 A"/>
    <property type="chains" value="W=5-304"/>
</dbReference>
<dbReference type="PDB" id="9EH2">
    <property type="method" value="EM"/>
    <property type="resolution" value="3.10 A"/>
    <property type="chains" value="W=1-305"/>
</dbReference>
<dbReference type="PDB" id="9G8O">
    <property type="method" value="EM"/>
    <property type="resolution" value="3.40 A"/>
    <property type="chains" value="C/D=1-305"/>
</dbReference>
<dbReference type="PDB" id="9G8Q">
    <property type="method" value="EM"/>
    <property type="resolution" value="4.10 A"/>
    <property type="chains" value="C/D=1-305"/>
</dbReference>
<dbReference type="PDB" id="9G8R">
    <property type="method" value="EM"/>
    <property type="resolution" value="3.40 A"/>
    <property type="chains" value="C/D=1-305"/>
</dbReference>
<dbReference type="PDBsum" id="3OW8"/>
<dbReference type="PDBsum" id="6GMH"/>
<dbReference type="PDBsum" id="6TED"/>
<dbReference type="PDBsum" id="7OOP"/>
<dbReference type="PDBsum" id="7OPC"/>
<dbReference type="PDBsum" id="7OPD"/>
<dbReference type="PDBsum" id="7QDR"/>
<dbReference type="PDBsum" id="7QDS"/>
<dbReference type="PDBsum" id="7QDY"/>
<dbReference type="PDBsum" id="7QDZ"/>
<dbReference type="PDBsum" id="7UNC"/>
<dbReference type="PDBsum" id="7UND"/>
<dbReference type="PDBsum" id="8A3Y"/>
<dbReference type="PDBsum" id="9EGX"/>
<dbReference type="PDBsum" id="9EGY"/>
<dbReference type="PDBsum" id="9EGZ"/>
<dbReference type="PDBsum" id="9EH0"/>
<dbReference type="PDBsum" id="9EH1"/>
<dbReference type="PDBsum" id="9EH2"/>
<dbReference type="PDBsum" id="9G8O"/>
<dbReference type="PDBsum" id="9G8Q"/>
<dbReference type="PDBsum" id="9G8R"/>
<dbReference type="EMDB" id="EMD-0031"/>
<dbReference type="EMDB" id="EMD-10480"/>
<dbReference type="EMDB" id="EMD-13010"/>
<dbReference type="EMDB" id="EMD-13015"/>
<dbReference type="EMDB" id="EMD-13016"/>
<dbReference type="EMDB" id="EMD-13923"/>
<dbReference type="EMDB" id="EMD-13925"/>
<dbReference type="EMDB" id="EMD-13927"/>
<dbReference type="EMDB" id="EMD-13928"/>
<dbReference type="EMDB" id="EMD-15127"/>
<dbReference type="EMDB" id="EMD-26620"/>
<dbReference type="EMDB" id="EMD-26621"/>
<dbReference type="EMDB" id="EMD-48039"/>
<dbReference type="EMDB" id="EMD-48040"/>
<dbReference type="EMDB" id="EMD-48041"/>
<dbReference type="EMDB" id="EMD-48042"/>
<dbReference type="EMDB" id="EMD-48043"/>
<dbReference type="EMDB" id="EMD-48044"/>
<dbReference type="EMDB" id="EMD-51134"/>
<dbReference type="EMDB" id="EMD-51136"/>
<dbReference type="EMDB" id="EMD-51137"/>
<dbReference type="SMR" id="Q9GZS3"/>
<dbReference type="BioGRID" id="123255">
    <property type="interactions" value="236"/>
</dbReference>
<dbReference type="ComplexPortal" id="CPX-2381">
    <property type="entry name" value="PAF1 complex"/>
</dbReference>
<dbReference type="ComplexPortal" id="CPX-2736">
    <property type="entry name" value="SKI complex"/>
</dbReference>
<dbReference type="CORUM" id="Q9GZS3"/>
<dbReference type="DIP" id="DIP-36672N"/>
<dbReference type="FunCoup" id="Q9GZS3">
    <property type="interactions" value="1913"/>
</dbReference>
<dbReference type="IntAct" id="Q9GZS3">
    <property type="interactions" value="128"/>
</dbReference>
<dbReference type="MINT" id="Q9GZS3"/>
<dbReference type="STRING" id="9606.ENSP00000453801"/>
<dbReference type="GlyGen" id="Q9GZS3">
    <property type="glycosylation" value="1 site, 1 O-linked glycan (1 site)"/>
</dbReference>
<dbReference type="iPTMnet" id="Q9GZS3"/>
<dbReference type="PhosphoSitePlus" id="Q9GZS3"/>
<dbReference type="BioMuta" id="WDR61"/>
<dbReference type="DMDM" id="74761365"/>
<dbReference type="jPOST" id="Q9GZS3"/>
<dbReference type="MassIVE" id="Q9GZS3"/>
<dbReference type="PaxDb" id="9606-ENSP00000267973"/>
<dbReference type="PeptideAtlas" id="Q9GZS3"/>
<dbReference type="ProteomicsDB" id="80126"/>
<dbReference type="Pumba" id="Q9GZS3"/>
<dbReference type="Antibodypedia" id="27601">
    <property type="antibodies" value="310 antibodies from 29 providers"/>
</dbReference>
<dbReference type="DNASU" id="80349"/>
<dbReference type="Ensembl" id="ENST00000267973.7">
    <property type="protein sequence ID" value="ENSP00000267973.2"/>
    <property type="gene ID" value="ENSG00000140395.9"/>
</dbReference>
<dbReference type="Ensembl" id="ENST00000558311.5">
    <property type="protein sequence ID" value="ENSP00000453801.1"/>
    <property type="gene ID" value="ENSG00000140395.9"/>
</dbReference>
<dbReference type="GeneID" id="80349"/>
<dbReference type="KEGG" id="hsa:80349"/>
<dbReference type="MANE-Select" id="ENST00000267973.7">
    <property type="protein sequence ID" value="ENSP00000267973.2"/>
    <property type="RefSeq nucleotide sequence ID" value="NM_025234.3"/>
    <property type="RefSeq protein sequence ID" value="NP_079510.1"/>
</dbReference>
<dbReference type="UCSC" id="uc002bdn.4">
    <property type="organism name" value="human"/>
</dbReference>
<dbReference type="AGR" id="HGNC:30300"/>
<dbReference type="CTD" id="80349"/>
<dbReference type="DisGeNET" id="80349"/>
<dbReference type="GeneCards" id="SKIC8"/>
<dbReference type="HGNC" id="HGNC:30300">
    <property type="gene designation" value="SKIC8"/>
</dbReference>
<dbReference type="HPA" id="ENSG00000140395">
    <property type="expression patterns" value="Low tissue specificity"/>
</dbReference>
<dbReference type="MIM" id="609540">
    <property type="type" value="gene"/>
</dbReference>
<dbReference type="neXtProt" id="NX_Q9GZS3"/>
<dbReference type="OpenTargets" id="ENSG00000140395"/>
<dbReference type="PharmGKB" id="PA142670595"/>
<dbReference type="VEuPathDB" id="HostDB:ENSG00000140395"/>
<dbReference type="eggNOG" id="KOG4155">
    <property type="taxonomic scope" value="Eukaryota"/>
</dbReference>
<dbReference type="GeneTree" id="ENSGT00940000153533"/>
<dbReference type="InParanoid" id="Q9GZS3"/>
<dbReference type="OMA" id="LDSSMCL"/>
<dbReference type="OrthoDB" id="17410at2759"/>
<dbReference type="PAN-GO" id="Q9GZS3">
    <property type="GO annotations" value="2 GO annotations based on evolutionary models"/>
</dbReference>
<dbReference type="PhylomeDB" id="Q9GZS3"/>
<dbReference type="TreeFam" id="TF324549"/>
<dbReference type="PathwayCommons" id="Q9GZS3"/>
<dbReference type="Reactome" id="R-HSA-112382">
    <property type="pathway name" value="Formation of RNA Pol II elongation complex"/>
</dbReference>
<dbReference type="Reactome" id="R-HSA-429958">
    <property type="pathway name" value="mRNA decay by 3' to 5' exoribonuclease"/>
</dbReference>
<dbReference type="Reactome" id="R-HSA-674695">
    <property type="pathway name" value="RNA Polymerase II Pre-transcription Events"/>
</dbReference>
<dbReference type="Reactome" id="R-HSA-75955">
    <property type="pathway name" value="RNA Polymerase II Transcription Elongation"/>
</dbReference>
<dbReference type="Reactome" id="R-HSA-8866654">
    <property type="pathway name" value="E3 ubiquitin ligases ubiquitinate target proteins"/>
</dbReference>
<dbReference type="SignaLink" id="Q9GZS3"/>
<dbReference type="SIGNOR" id="Q9GZS3"/>
<dbReference type="BioGRID-ORCS" id="80349">
    <property type="hits" value="646 hits in 1179 CRISPR screens"/>
</dbReference>
<dbReference type="CD-CODE" id="91857CE7">
    <property type="entry name" value="Nucleolus"/>
</dbReference>
<dbReference type="ChiTaRS" id="WDR61">
    <property type="organism name" value="human"/>
</dbReference>
<dbReference type="EvolutionaryTrace" id="Q9GZS3"/>
<dbReference type="GenomeRNAi" id="80349"/>
<dbReference type="Pharos" id="Q9GZS3">
    <property type="development level" value="Tbio"/>
</dbReference>
<dbReference type="PRO" id="PR:Q9GZS3"/>
<dbReference type="Proteomes" id="UP000005640">
    <property type="component" value="Chromosome 15"/>
</dbReference>
<dbReference type="RNAct" id="Q9GZS3">
    <property type="molecule type" value="protein"/>
</dbReference>
<dbReference type="Bgee" id="ENSG00000140395">
    <property type="expression patterns" value="Expressed in tibia and 210 other cell types or tissues"/>
</dbReference>
<dbReference type="ExpressionAtlas" id="Q9GZS3">
    <property type="expression patterns" value="baseline and differential"/>
</dbReference>
<dbReference type="GO" id="GO:0016593">
    <property type="term" value="C:Cdc73/Paf1 complex"/>
    <property type="evidence" value="ECO:0000314"/>
    <property type="project" value="UniProtKB"/>
</dbReference>
<dbReference type="GO" id="GO:0005737">
    <property type="term" value="C:cytoplasm"/>
    <property type="evidence" value="ECO:0000314"/>
    <property type="project" value="UniProtKB"/>
</dbReference>
<dbReference type="GO" id="GO:0005829">
    <property type="term" value="C:cytosol"/>
    <property type="evidence" value="ECO:0000314"/>
    <property type="project" value="HPA"/>
</dbReference>
<dbReference type="GO" id="GO:0000791">
    <property type="term" value="C:euchromatin"/>
    <property type="evidence" value="ECO:0000314"/>
    <property type="project" value="UniProtKB"/>
</dbReference>
<dbReference type="GO" id="GO:0005654">
    <property type="term" value="C:nucleoplasm"/>
    <property type="evidence" value="ECO:0000314"/>
    <property type="project" value="HPA"/>
</dbReference>
<dbReference type="GO" id="GO:0005634">
    <property type="term" value="C:nucleus"/>
    <property type="evidence" value="ECO:0000314"/>
    <property type="project" value="UniProtKB"/>
</dbReference>
<dbReference type="GO" id="GO:0055087">
    <property type="term" value="C:Ski complex"/>
    <property type="evidence" value="ECO:0000314"/>
    <property type="project" value="UniProtKB"/>
</dbReference>
<dbReference type="GO" id="GO:0045638">
    <property type="term" value="P:negative regulation of myeloid cell differentiation"/>
    <property type="evidence" value="ECO:0000314"/>
    <property type="project" value="UniProtKB"/>
</dbReference>
<dbReference type="GO" id="GO:0070478">
    <property type="term" value="P:nuclear-transcribed mRNA catabolic process, 3'-5' exonucleolytic nonsense-mediated decay"/>
    <property type="evidence" value="ECO:0000314"/>
    <property type="project" value="UniProtKB"/>
</dbReference>
<dbReference type="GO" id="GO:0072344">
    <property type="term" value="P:rescue of stalled ribosome"/>
    <property type="evidence" value="ECO:0000314"/>
    <property type="project" value="UniProtKB"/>
</dbReference>
<dbReference type="GO" id="GO:0006368">
    <property type="term" value="P:transcription elongation by RNA polymerase II"/>
    <property type="evidence" value="ECO:0000314"/>
    <property type="project" value="GO_Central"/>
</dbReference>
<dbReference type="GO" id="GO:0016055">
    <property type="term" value="P:Wnt signaling pathway"/>
    <property type="evidence" value="ECO:0007669"/>
    <property type="project" value="UniProtKB-KW"/>
</dbReference>
<dbReference type="CDD" id="cd00200">
    <property type="entry name" value="WD40"/>
    <property type="match status" value="1"/>
</dbReference>
<dbReference type="FunFam" id="2.130.10.10:FF:000094">
    <property type="entry name" value="WD repeat-containing protein 61"/>
    <property type="match status" value="1"/>
</dbReference>
<dbReference type="Gene3D" id="2.130.10.10">
    <property type="entry name" value="YVTN repeat-like/Quinoprotein amine dehydrogenase"/>
    <property type="match status" value="1"/>
</dbReference>
<dbReference type="InterPro" id="IPR020472">
    <property type="entry name" value="G-protein_beta_WD-40_rep"/>
</dbReference>
<dbReference type="InterPro" id="IPR051510">
    <property type="entry name" value="SKI8"/>
</dbReference>
<dbReference type="InterPro" id="IPR015943">
    <property type="entry name" value="WD40/YVTN_repeat-like_dom_sf"/>
</dbReference>
<dbReference type="InterPro" id="IPR019775">
    <property type="entry name" value="WD40_repeat_CS"/>
</dbReference>
<dbReference type="InterPro" id="IPR036322">
    <property type="entry name" value="WD40_repeat_dom_sf"/>
</dbReference>
<dbReference type="InterPro" id="IPR001680">
    <property type="entry name" value="WD40_rpt"/>
</dbReference>
<dbReference type="PANTHER" id="PTHR44090:SF1">
    <property type="entry name" value="SUPERKILLER COMPLEX PROTEIN 8"/>
    <property type="match status" value="1"/>
</dbReference>
<dbReference type="PANTHER" id="PTHR44090">
    <property type="entry name" value="WD REPEAT-CONTAINING PROTEIN 61"/>
    <property type="match status" value="1"/>
</dbReference>
<dbReference type="Pfam" id="PF00400">
    <property type="entry name" value="WD40"/>
    <property type="match status" value="7"/>
</dbReference>
<dbReference type="PRINTS" id="PR00320">
    <property type="entry name" value="GPROTEINBRPT"/>
</dbReference>
<dbReference type="SMART" id="SM00320">
    <property type="entry name" value="WD40"/>
    <property type="match status" value="7"/>
</dbReference>
<dbReference type="SUPFAM" id="SSF50978">
    <property type="entry name" value="WD40 repeat-like"/>
    <property type="match status" value="1"/>
</dbReference>
<dbReference type="PROSITE" id="PS00678">
    <property type="entry name" value="WD_REPEATS_1"/>
    <property type="match status" value="1"/>
</dbReference>
<dbReference type="PROSITE" id="PS50082">
    <property type="entry name" value="WD_REPEATS_2"/>
    <property type="match status" value="6"/>
</dbReference>
<dbReference type="PROSITE" id="PS50294">
    <property type="entry name" value="WD_REPEATS_REGION"/>
    <property type="match status" value="1"/>
</dbReference>
<accession>Q9GZS3</accession>
<accession>D3DW84</accession>
<accession>Q6IA22</accession>
<accession>Q7Z4X4</accession>
<comment type="function">
    <text evidence="2 3 5 6 7 8">Component of the PAF1 complex (PAF1C) which has multiple functions during transcription by RNA polymerase II and is implicated in regulation of development and maintenance of embryonic stem cell pluripotency (PubMed:16307923, PubMed:19952111, PubMed:20178742). PAF1C associates with RNA polymerase II through interaction with POLR2A CTD non-phosphorylated and 'Ser-2'- and 'Ser-5'-phosphorylated forms and is involved in transcriptional elongation, acting both independently and synergistically with TCEA1 and in cooperation with the DSIF complex and HTATSF1 (PubMed:16307923, PubMed:19952111, PubMed:20178742). PAF1C is required for transcription of Hox and Wnt target genes (PubMed:16307923, PubMed:19952111, PubMed:20178742). PAF1C is involved in hematopoiesis and stimulates transcriptional activity of KMT2A/MLL1; it promotes leukemogenesis through association with KMT2A/MLL1-rearranged oncoproteins, such as KMT2A/MLL1-MLLT3/AF9 and KMT2A/MLL1-MLLT1/ENL (PubMed:16307923, PubMed:19952111, PubMed:20178742). PAF1C is involved in histone modifications such as ubiquitination of histone H2B and methylation on histone H3 'Lys-4' (H3K4me3) (PubMed:16307923, PubMed:19952111, PubMed:20178742). PAF1C recruits the RNF20/40 E3 ubiquitin-protein ligase complex and the E2 enzyme UBE2A or UBE2B to chromatin which mediate monoubiquitination of 'Lys-120' of histone H2B (H2BK120ub1); UB2A/B-mediated H2B ubiquitination is proposed to be coupled to transcription (PubMed:16307923, PubMed:19952111, PubMed:20178742). PAF1C is involved in mRNA 3' end formation probably through association with cleavage and poly(A) factors (PubMed:16307923, PubMed:19952111, PubMed:20178742). In case of infection by influenza A strain H3N2, PAF1C associates with viral NS1 protein, thereby regulating gene transcription (PubMed:16307923, PubMed:19952111, PubMed:20178742). Required for mono- and trimethylation on histone H3 'Lys-4' (H3K4me3), dimethylation on histone H3 'Lys-79' (H3K4me3). Required for Hox gene transcription (PubMed:16307923, PubMed:19952111, PubMed:20178742). Also acts as a component of the SKI complex, a multiprotein complex that assists the RNA-degrading exosome during the mRNA decay and quality-control pathways (PubMed:16024656, PubMed:32006463, PubMed:35120588). The SKI complex catalyzes mRNA extraction from 80S ribosomal complexes in the 3'-5' direction and channels mRNA to the cytosolic exosome for degradation (PubMed:32006463, PubMed:35120588). SKI-mediated extraction of mRNA from stalled ribosomes allow binding of the Pelota-HBS1L complex and subsequent ribosome disassembly by ABCE1 for ribosome recycling (PubMed:32006463).</text>
</comment>
<comment type="subunit">
    <text evidence="1 2 5 6 7 8">Component of the PAF1 complex, which consists of CDC73, PAF1, LEO1, CTR9, RTF1 and SKIC8 (PubMed:16024656, PubMed:19952111, PubMed:20178742). The PAF1 complex interacts with PHF5A (By similarity). Within the PAF1 complex interacts directly with PHF5A (By similarity). Component of the SKI complex which consists of SKIC2, SKIC3 and SKIC8 (PubMed:16024656, PubMed:32006463, PubMed:35120588).</text>
</comment>
<comment type="interaction">
    <interactant intactId="EBI-358545">
        <id>Q9GZS3</id>
    </interactant>
    <interactant intactId="EBI-25928834">
        <id>A0A0S2Z5Q7</id>
        <label>ALS2</label>
    </interactant>
    <organismsDiffer>false</organismsDiffer>
    <experiments>3</experiments>
</comment>
<comment type="interaction">
    <interactant intactId="EBI-358545">
        <id>Q9GZS3</id>
    </interactant>
    <interactant intactId="EBI-77613">
        <id>P05067</id>
        <label>APP</label>
    </interactant>
    <organismsDiffer>false</organismsDiffer>
    <experiments>3</experiments>
</comment>
<comment type="interaction">
    <interactant intactId="EBI-358545">
        <id>Q9GZS3</id>
    </interactant>
    <interactant intactId="EBI-17264467">
        <id>P05067-2</id>
        <label>APP</label>
    </interactant>
    <organismsDiffer>false</organismsDiffer>
    <experiments>3</experiments>
</comment>
<comment type="interaction">
    <interactant intactId="EBI-358545">
        <id>Q9GZS3</id>
    </interactant>
    <interactant intactId="EBI-930964">
        <id>P54253</id>
        <label>ATXN1</label>
    </interactant>
    <organismsDiffer>false</organismsDiffer>
    <experiments>6</experiments>
</comment>
<comment type="interaction">
    <interactant intactId="EBI-358545">
        <id>Q9GZS3</id>
    </interactant>
    <interactant intactId="EBI-702390">
        <id>Q9UBB4</id>
        <label>ATXN10</label>
    </interactant>
    <organismsDiffer>false</organismsDiffer>
    <experiments>3</experiments>
</comment>
<comment type="interaction">
    <interactant intactId="EBI-358545">
        <id>Q9GZS3</id>
    </interactant>
    <interactant intactId="EBI-10178113">
        <id>Q96G97-4</id>
        <label>BSCL2</label>
    </interactant>
    <organismsDiffer>false</organismsDiffer>
    <experiments>3</experiments>
</comment>
<comment type="interaction">
    <interactant intactId="EBI-358545">
        <id>Q9GZS3</id>
    </interactant>
    <interactant intactId="EBI-1019583">
        <id>Q6PD62</id>
        <label>CTR9</label>
    </interactant>
    <organismsDiffer>false</organismsDiffer>
    <experiments>14</experiments>
</comment>
<comment type="interaction">
    <interactant intactId="EBI-358545">
        <id>Q9GZS3</id>
    </interactant>
    <interactant intactId="EBI-8589586">
        <id>P09172</id>
        <label>DBH</label>
    </interactant>
    <organismsDiffer>false</organismsDiffer>
    <experiments>3</experiments>
</comment>
<comment type="interaction">
    <interactant intactId="EBI-358545">
        <id>Q9GZS3</id>
    </interactant>
    <interactant intactId="EBI-25840379">
        <id>Q14203-5</id>
        <label>DCTN1</label>
    </interactant>
    <organismsDiffer>false</organismsDiffer>
    <experiments>3</experiments>
</comment>
<comment type="interaction">
    <interactant intactId="EBI-358545">
        <id>Q9GZS3</id>
    </interactant>
    <interactant intactId="EBI-21603100">
        <id>P26378-2</id>
        <label>ELAVL4</label>
    </interactant>
    <organismsDiffer>false</organismsDiffer>
    <experiments>3</experiments>
</comment>
<comment type="interaction">
    <interactant intactId="EBI-358545">
        <id>Q9GZS3</id>
    </interactant>
    <interactant intactId="EBI-16466949">
        <id>Q13216-2</id>
        <label>ERCC8</label>
    </interactant>
    <organismsDiffer>false</organismsDiffer>
    <experiments>3</experiments>
</comment>
<comment type="interaction">
    <interactant intactId="EBI-358545">
        <id>Q9GZS3</id>
    </interactant>
    <interactant intactId="EBI-949340">
        <id>Q16595</id>
        <label>FXN</label>
    </interactant>
    <organismsDiffer>false</organismsDiffer>
    <experiments>3</experiments>
</comment>
<comment type="interaction">
    <interactant intactId="EBI-358545">
        <id>Q9GZS3</id>
    </interactant>
    <interactant intactId="EBI-11110431">
        <id>Q8TB36</id>
        <label>GDAP1</label>
    </interactant>
    <organismsDiffer>false</organismsDiffer>
    <experiments>3</experiments>
</comment>
<comment type="interaction">
    <interactant intactId="EBI-358545">
        <id>Q9GZS3</id>
    </interactant>
    <interactant intactId="EBI-744302">
        <id>P14136</id>
        <label>GFAP</label>
    </interactant>
    <organismsDiffer>false</organismsDiffer>
    <experiments>3</experiments>
</comment>
<comment type="interaction">
    <interactant intactId="EBI-358545">
        <id>Q9GZS3</id>
    </interactant>
    <interactant intactId="EBI-1955541">
        <id>Q53GS7</id>
        <label>GLE1</label>
    </interactant>
    <organismsDiffer>false</organismsDiffer>
    <experiments>3</experiments>
</comment>
<comment type="interaction">
    <interactant intactId="EBI-358545">
        <id>Q9GZS3</id>
    </interactant>
    <interactant intactId="EBI-747754">
        <id>P28799</id>
        <label>GRN</label>
    </interactant>
    <organismsDiffer>false</organismsDiffer>
    <experiments>3</experiments>
</comment>
<comment type="interaction">
    <interactant intactId="EBI-358545">
        <id>Q9GZS3</id>
    </interactant>
    <interactant intactId="EBI-12690664">
        <id>P28358</id>
        <label>HOXD10</label>
    </interactant>
    <organismsDiffer>false</organismsDiffer>
    <experiments>3</experiments>
</comment>
<comment type="interaction">
    <interactant intactId="EBI-358545">
        <id>Q9GZS3</id>
    </interactant>
    <interactant intactId="EBI-466029">
        <id>P42858</id>
        <label>HTT</label>
    </interactant>
    <organismsDiffer>false</organismsDiffer>
    <experiments>22</experiments>
</comment>
<comment type="interaction">
    <interactant intactId="EBI-358545">
        <id>Q9GZS3</id>
    </interactant>
    <interactant intactId="EBI-1055254">
        <id>Q8WXH2</id>
        <label>JPH3</label>
    </interactant>
    <organismsDiffer>false</organismsDiffer>
    <experiments>3</experiments>
</comment>
<comment type="interaction">
    <interactant intactId="EBI-358545">
        <id>Q9GZS3</id>
    </interactant>
    <interactant intactId="EBI-351953">
        <id>P02545-2</id>
        <label>LMNA</label>
    </interactant>
    <organismsDiffer>false</organismsDiffer>
    <experiments>3</experiments>
</comment>
<comment type="interaction">
    <interactant intactId="EBI-358545">
        <id>Q9GZS3</id>
    </interactant>
    <interactant intactId="EBI-10699187">
        <id>Q8IXL7-2</id>
        <label>MSRB3</label>
    </interactant>
    <organismsDiffer>false</organismsDiffer>
    <experiments>3</experiments>
</comment>
<comment type="interaction">
    <interactant intactId="EBI-358545">
        <id>Q9GZS3</id>
    </interactant>
    <interactant intactId="EBI-713665">
        <id>P19404</id>
        <label>NDUFV2</label>
    </interactant>
    <organismsDiffer>false</organismsDiffer>
    <experiments>3</experiments>
</comment>
<comment type="interaction">
    <interactant intactId="EBI-358545">
        <id>Q9GZS3</id>
    </interactant>
    <interactant intactId="EBI-1391623">
        <id>P29474</id>
        <label>NOS3</label>
    </interactant>
    <organismsDiffer>false</organismsDiffer>
    <experiments>3</experiments>
</comment>
<comment type="interaction">
    <interactant intactId="EBI-358545">
        <id>Q9GZS3</id>
    </interactant>
    <interactant intactId="EBI-25929070">
        <id>Q9BZ23-2</id>
        <label>PANK2</label>
    </interactant>
    <organismsDiffer>false</organismsDiffer>
    <experiments>3</experiments>
</comment>
<comment type="interaction">
    <interactant intactId="EBI-358545">
        <id>Q9GZS3</id>
    </interactant>
    <interactant intactId="EBI-1164361">
        <id>Q99497</id>
        <label>PARK7</label>
    </interactant>
    <organismsDiffer>false</organismsDiffer>
    <experiments>3</experiments>
</comment>
<comment type="interaction">
    <interactant intactId="EBI-358545">
        <id>Q9GZS3</id>
    </interactant>
    <interactant intactId="EBI-988601">
        <id>O43933</id>
        <label>PEX1</label>
    </interactant>
    <organismsDiffer>false</organismsDiffer>
    <experiments>3</experiments>
</comment>
<comment type="interaction">
    <interactant intactId="EBI-358545">
        <id>Q9GZS3</id>
    </interactant>
    <interactant intactId="EBI-752057">
        <id>Q7Z412</id>
        <label>PEX26</label>
    </interactant>
    <organismsDiffer>false</organismsDiffer>
    <experiments>3</experiments>
</comment>
<comment type="interaction">
    <interactant intactId="EBI-358545">
        <id>Q9GZS3</id>
    </interactant>
    <interactant intactId="EBI-21251460">
        <id>O60260-5</id>
        <label>PRKN</label>
    </interactant>
    <organismsDiffer>false</organismsDiffer>
    <experiments>6</experiments>
</comment>
<comment type="interaction">
    <interactant intactId="EBI-358545">
        <id>Q9GZS3</id>
    </interactant>
    <interactant intactId="EBI-11047108">
        <id>P49768-2</id>
        <label>PSEN1</label>
    </interactant>
    <organismsDiffer>false</organismsDiffer>
    <experiments>6</experiments>
</comment>
<comment type="interaction">
    <interactant intactId="EBI-358545">
        <id>Q9GZS3</id>
    </interactant>
    <interactant intactId="EBI-2010251">
        <id>P49810</id>
        <label>PSEN2</label>
    </interactant>
    <organismsDiffer>false</organismsDiffer>
    <experiments>3</experiments>
</comment>
<comment type="interaction">
    <interactant intactId="EBI-358545">
        <id>Q9GZS3</id>
    </interactant>
    <interactant intactId="EBI-1056089">
        <id>P51149</id>
        <label>RAB7A</label>
    </interactant>
    <organismsDiffer>false</organismsDiffer>
    <experiments>3</experiments>
</comment>
<comment type="interaction">
    <interactant intactId="EBI-358545">
        <id>Q9GZS3</id>
    </interactant>
    <interactant intactId="EBI-396669">
        <id>Q9Y3C5</id>
        <label>RNF11</label>
    </interactant>
    <organismsDiffer>false</organismsDiffer>
    <experiments>3</experiments>
</comment>
<comment type="interaction">
    <interactant intactId="EBI-358545">
        <id>Q9GZS3</id>
    </interactant>
    <interactant intactId="EBI-1220123">
        <id>Q7Z333</id>
        <label>SETX</label>
    </interactant>
    <organismsDiffer>false</organismsDiffer>
    <experiments>3</experiments>
</comment>
<comment type="interaction">
    <interactant intactId="EBI-358545">
        <id>Q9GZS3</id>
    </interactant>
    <interactant intactId="EBI-985879">
        <id>P37840</id>
        <label>SNCA</label>
    </interactant>
    <organismsDiffer>false</organismsDiffer>
    <experiments>3</experiments>
</comment>
<comment type="interaction">
    <interactant intactId="EBI-358545">
        <id>Q9GZS3</id>
    </interactant>
    <interactant intactId="EBI-727106">
        <id>Q16143</id>
        <label>SNCB</label>
    </interactant>
    <organismsDiffer>false</organismsDiffer>
    <experiments>3</experiments>
</comment>
<comment type="interaction">
    <interactant intactId="EBI-358545">
        <id>Q9GZS3</id>
    </interactant>
    <interactant intactId="EBI-990792">
        <id>P00441</id>
        <label>SOD1</label>
    </interactant>
    <organismsDiffer>false</organismsDiffer>
    <experiments>3</experiments>
</comment>
<comment type="interaction">
    <interactant intactId="EBI-358545">
        <id>Q9GZS3</id>
    </interactant>
    <interactant intactId="EBI-5235340">
        <id>Q7Z699</id>
        <label>SPRED1</label>
    </interactant>
    <organismsDiffer>false</organismsDiffer>
    <experiments>3</experiments>
</comment>
<comment type="interaction">
    <interactant intactId="EBI-358545">
        <id>Q9GZS3</id>
    </interactant>
    <interactant intactId="EBI-25912847">
        <id>Q6NUL7</id>
        <label>SPTLC1</label>
    </interactant>
    <organismsDiffer>false</organismsDiffer>
    <experiments>3</experiments>
</comment>
<comment type="interaction">
    <interactant intactId="EBI-358545">
        <id>Q9GZS3</id>
    </interactant>
    <interactant intactId="EBI-372899">
        <id>Q13148</id>
        <label>TARDBP</label>
    </interactant>
    <organismsDiffer>false</organismsDiffer>
    <experiments>6</experiments>
</comment>
<comment type="interaction">
    <interactant intactId="EBI-358545">
        <id>Q9GZS3</id>
    </interactant>
    <interactant intactId="EBI-25930156">
        <id>Q6IQ55-3</id>
        <label>TTBK2</label>
    </interactant>
    <organismsDiffer>false</organismsDiffer>
    <experiments>3</experiments>
</comment>
<comment type="interaction">
    <interactant intactId="EBI-358545">
        <id>Q9GZS3</id>
    </interactant>
    <interactant intactId="EBI-1188298">
        <id>O95292</id>
        <label>VAPB</label>
    </interactant>
    <organismsDiffer>false</organismsDiffer>
    <experiments>3</experiments>
</comment>
<comment type="interaction">
    <interactant intactId="EBI-358545">
        <id>Q9GZS3</id>
    </interactant>
    <interactant intactId="EBI-12157263">
        <id>P40337-2</id>
        <label>VHL</label>
    </interactant>
    <organismsDiffer>false</organismsDiffer>
    <experiments>3</experiments>
</comment>
<comment type="interaction">
    <interactant intactId="EBI-358545">
        <id>Q9GZS3</id>
    </interactant>
    <interactant intactId="EBI-25878161">
        <id>Q9P1N4</id>
    </interactant>
    <organismsDiffer>false</organismsDiffer>
    <experiments>3</experiments>
</comment>
<comment type="subcellular location">
    <subcellularLocation>
        <location evidence="2 4">Nucleus</location>
    </subcellularLocation>
    <subcellularLocation>
        <location evidence="4 11">Cytoplasm</location>
    </subcellularLocation>
</comment>
<comment type="similarity">
    <text evidence="10">Belongs to the SKI8 family.</text>
</comment>
<evidence type="ECO:0000250" key="1">
    <source>
        <dbReference type="UniProtKB" id="Q9ERF3"/>
    </source>
</evidence>
<evidence type="ECO:0000269" key="2">
    <source>
    </source>
</evidence>
<evidence type="ECO:0000269" key="3">
    <source>
    </source>
</evidence>
<evidence type="ECO:0000269" key="4">
    <source>
    </source>
</evidence>
<evidence type="ECO:0000269" key="5">
    <source>
    </source>
</evidence>
<evidence type="ECO:0000269" key="6">
    <source>
    </source>
</evidence>
<evidence type="ECO:0000269" key="7">
    <source>
    </source>
</evidence>
<evidence type="ECO:0000269" key="8">
    <source>
    </source>
</evidence>
<evidence type="ECO:0000303" key="9">
    <source ref="1"/>
</evidence>
<evidence type="ECO:0000305" key="10"/>
<evidence type="ECO:0000305" key="11">
    <source>
    </source>
</evidence>
<evidence type="ECO:0000312" key="12">
    <source>
        <dbReference type="HGNC" id="HGNC:30300"/>
    </source>
</evidence>
<evidence type="ECO:0007744" key="13">
    <source>
        <dbReference type="PDB" id="7QDR"/>
    </source>
</evidence>
<evidence type="ECO:0007744" key="14">
    <source>
        <dbReference type="PDB" id="7QDS"/>
    </source>
</evidence>
<evidence type="ECO:0007744" key="15">
    <source>
        <dbReference type="PDB" id="7QDY"/>
    </source>
</evidence>
<evidence type="ECO:0007744" key="16">
    <source>
        <dbReference type="PDB" id="7QDZ"/>
    </source>
</evidence>
<evidence type="ECO:0007744" key="17">
    <source>
    </source>
</evidence>
<evidence type="ECO:0007744" key="18">
    <source>
    </source>
</evidence>
<evidence type="ECO:0007829" key="19">
    <source>
        <dbReference type="PDB" id="3OW8"/>
    </source>
</evidence>
<evidence type="ECO:0007829" key="20">
    <source>
        <dbReference type="PDB" id="6GMH"/>
    </source>
</evidence>
<evidence type="ECO:0007829" key="21">
    <source>
        <dbReference type="PDB" id="6TED"/>
    </source>
</evidence>
<evidence type="ECO:0007829" key="22">
    <source>
        <dbReference type="PDB" id="7QDY"/>
    </source>
</evidence>
<evidence type="ECO:0007829" key="23">
    <source>
        <dbReference type="PDB" id="9G8R"/>
    </source>
</evidence>
<protein>
    <recommendedName>
        <fullName evidence="10">Superkiller complex protein 8</fullName>
        <shortName>Ski8</shortName>
    </recommendedName>
    <alternativeName>
        <fullName evidence="9">Meiotic recombination REC14 protein homolog</fullName>
    </alternativeName>
    <alternativeName>
        <fullName>WD repeat-containing protein 61</fullName>
    </alternativeName>
    <component>
        <recommendedName>
            <fullName>Superkiller complex protein 8, N-terminally processed</fullName>
        </recommendedName>
        <alternativeName>
            <fullName>WD repeat-containing protein 61, N-terminally processed</fullName>
        </alternativeName>
    </component>
</protein>
<name>SKI8_HUMAN</name>
<gene>
    <name evidence="12" type="primary">SKIC8</name>
    <name type="synonym">WDR61</name>
</gene>